<sequence>ARPYSFGL</sequence>
<keyword id="KW-0027">Amidation</keyword>
<keyword id="KW-0903">Direct protein sequencing</keyword>
<keyword id="KW-0527">Neuropeptide</keyword>
<keyword id="KW-0964">Secreted</keyword>
<protein>
    <recommendedName>
        <fullName>Cydiastatin-4</fullName>
    </recommendedName>
</protein>
<accession>P82155</accession>
<evidence type="ECO:0000269" key="1">
    <source>
    </source>
</evidence>
<evidence type="ECO:0000305" key="2"/>
<dbReference type="GO" id="GO:0005576">
    <property type="term" value="C:extracellular region"/>
    <property type="evidence" value="ECO:0007669"/>
    <property type="project" value="UniProtKB-SubCell"/>
</dbReference>
<dbReference type="GO" id="GO:0007218">
    <property type="term" value="P:neuropeptide signaling pathway"/>
    <property type="evidence" value="ECO:0007669"/>
    <property type="project" value="UniProtKB-KW"/>
</dbReference>
<name>ALL4_CYDPO</name>
<reference key="1">
    <citation type="journal article" date="1997" name="Peptides">
        <title>Lepidopteran peptides of the allatostatin superfamily.</title>
        <authorList>
            <person name="Duve H."/>
            <person name="Johnsen A.H."/>
            <person name="Maestro J.-L."/>
            <person name="Scott A.G."/>
            <person name="Winstanley D."/>
            <person name="Davey M."/>
            <person name="East P.D."/>
            <person name="Thorpe A."/>
        </authorList>
    </citation>
    <scope>PROTEIN SEQUENCE</scope>
    <scope>AMIDATION AT LEU-8</scope>
    <source>
        <tissue>Larva</tissue>
    </source>
</reference>
<organism>
    <name type="scientific">Cydia pomonella</name>
    <name type="common">Codling moth</name>
    <dbReference type="NCBI Taxonomy" id="82600"/>
    <lineage>
        <taxon>Eukaryota</taxon>
        <taxon>Metazoa</taxon>
        <taxon>Ecdysozoa</taxon>
        <taxon>Arthropoda</taxon>
        <taxon>Hexapoda</taxon>
        <taxon>Insecta</taxon>
        <taxon>Pterygota</taxon>
        <taxon>Neoptera</taxon>
        <taxon>Endopterygota</taxon>
        <taxon>Lepidoptera</taxon>
        <taxon>Glossata</taxon>
        <taxon>Ditrysia</taxon>
        <taxon>Tortricoidea</taxon>
        <taxon>Tortricidae</taxon>
        <taxon>Olethreutinae</taxon>
        <taxon>Grapholitini</taxon>
        <taxon>Cydia</taxon>
    </lineage>
</organism>
<comment type="subcellular location">
    <subcellularLocation>
        <location>Secreted</location>
    </subcellularLocation>
</comment>
<comment type="similarity">
    <text evidence="2">Belongs to the allatostatin family.</text>
</comment>
<feature type="peptide" id="PRO_0000043479" description="Cydiastatin-4">
    <location>
        <begin position="1"/>
        <end position="8"/>
    </location>
</feature>
<feature type="modified residue" description="Leucine amide" evidence="1">
    <location>
        <position position="8"/>
    </location>
</feature>
<proteinExistence type="evidence at protein level"/>